<evidence type="ECO:0000255" key="1">
    <source>
        <dbReference type="PROSITE-ProRule" id="PRU10088"/>
    </source>
</evidence>
<evidence type="ECO:0000255" key="2">
    <source>
        <dbReference type="PROSITE-ProRule" id="PRU10089"/>
    </source>
</evidence>
<evidence type="ECO:0000255" key="3">
    <source>
        <dbReference type="PROSITE-ProRule" id="PRU10090"/>
    </source>
</evidence>
<evidence type="ECO:0000305" key="4"/>
<proteinExistence type="evidence at protein level"/>
<sequence length="20" mass="2515">SNDVSWHEWKRMYNKEYNGA</sequence>
<comment type="function">
    <text>Thiol protease.</text>
</comment>
<comment type="subcellular location">
    <subcellularLocation>
        <location evidence="4">Lysosome</location>
    </subcellularLocation>
</comment>
<comment type="developmental stage">
    <text>Expressed at the newly excysted juvenile stage.</text>
</comment>
<comment type="similarity">
    <text evidence="1 2 3">Belongs to the peptidase C1 family.</text>
</comment>
<protein>
    <recommendedName>
        <fullName>Cathepsin L-like cysteine proteinase</fullName>
        <ecNumber>3.4.22.-</ecNumber>
    </recommendedName>
    <alternativeName>
        <fullName>Newly excysted juvenile protein 4</fullName>
    </alternativeName>
</protein>
<dbReference type="EC" id="3.4.22.-"/>
<dbReference type="MEROPS" id="C01.013"/>
<dbReference type="GO" id="GO:0005764">
    <property type="term" value="C:lysosome"/>
    <property type="evidence" value="ECO:0007669"/>
    <property type="project" value="UniProtKB-SubCell"/>
</dbReference>
<dbReference type="GO" id="GO:0008234">
    <property type="term" value="F:cysteine-type peptidase activity"/>
    <property type="evidence" value="ECO:0007669"/>
    <property type="project" value="UniProtKB-KW"/>
</dbReference>
<dbReference type="GO" id="GO:0006508">
    <property type="term" value="P:proteolysis"/>
    <property type="evidence" value="ECO:0007669"/>
    <property type="project" value="UniProtKB-KW"/>
</dbReference>
<accession>P80528</accession>
<keyword id="KW-0903">Direct protein sequencing</keyword>
<keyword id="KW-0378">Hydrolase</keyword>
<keyword id="KW-0458">Lysosome</keyword>
<keyword id="KW-0645">Protease</keyword>
<keyword id="KW-0788">Thiol protease</keyword>
<organism>
    <name type="scientific">Fasciola hepatica</name>
    <name type="common">Liver fluke</name>
    <dbReference type="NCBI Taxonomy" id="6192"/>
    <lineage>
        <taxon>Eukaryota</taxon>
        <taxon>Metazoa</taxon>
        <taxon>Spiralia</taxon>
        <taxon>Lophotrochozoa</taxon>
        <taxon>Platyhelminthes</taxon>
        <taxon>Trematoda</taxon>
        <taxon>Digenea</taxon>
        <taxon>Plagiorchiida</taxon>
        <taxon>Echinostomata</taxon>
        <taxon>Echinostomatoidea</taxon>
        <taxon>Fasciolidae</taxon>
        <taxon>Fasciola</taxon>
    </lineage>
</organism>
<name>CATL4_FASHE</name>
<reference key="1">
    <citation type="journal article" date="1995" name="Biochem. Biophys. Res. Commun.">
        <title>Fasciola hepatica: rapid identification of newly excysted juvenile proteins.</title>
        <authorList>
            <person name="Tkalcevic J."/>
            <person name="Ashman K."/>
            <person name="Meeusen E."/>
        </authorList>
    </citation>
    <scope>PROTEIN SEQUENCE</scope>
</reference>
<feature type="chain" id="PRO_0000050541" description="Cathepsin L-like cysteine proteinase">
    <location>
        <begin position="1"/>
        <end position="20" status="greater than"/>
    </location>
</feature>
<feature type="non-terminal residue">
    <location>
        <position position="20"/>
    </location>
</feature>